<protein>
    <recommendedName>
        <fullName>DNA repair protein rad13</fullName>
        <ecNumber>3.1.-.-</ecNumber>
    </recommendedName>
</protein>
<organism>
    <name type="scientific">Schizosaccharomyces pombe (strain 972 / ATCC 24843)</name>
    <name type="common">Fission yeast</name>
    <dbReference type="NCBI Taxonomy" id="284812"/>
    <lineage>
        <taxon>Eukaryota</taxon>
        <taxon>Fungi</taxon>
        <taxon>Dikarya</taxon>
        <taxon>Ascomycota</taxon>
        <taxon>Taphrinomycotina</taxon>
        <taxon>Schizosaccharomycetes</taxon>
        <taxon>Schizosaccharomycetales</taxon>
        <taxon>Schizosaccharomycetaceae</taxon>
        <taxon>Schizosaccharomyces</taxon>
    </lineage>
</organism>
<keyword id="KW-0227">DNA damage</keyword>
<keyword id="KW-0234">DNA repair</keyword>
<keyword id="KW-0255">Endonuclease</keyword>
<keyword id="KW-0378">Hydrolase</keyword>
<keyword id="KW-0460">Magnesium</keyword>
<keyword id="KW-0479">Metal-binding</keyword>
<keyword id="KW-0540">Nuclease</keyword>
<keyword id="KW-0539">Nucleus</keyword>
<keyword id="KW-1185">Reference proteome</keyword>
<name>RAD13_SCHPO</name>
<dbReference type="EC" id="3.1.-.-"/>
<dbReference type="EMBL" id="X66795">
    <property type="protein sequence ID" value="CAA47291.1"/>
    <property type="molecule type" value="mRNA"/>
</dbReference>
<dbReference type="EMBL" id="CU329671">
    <property type="protein sequence ID" value="CAA19011.1"/>
    <property type="molecule type" value="Genomic_DNA"/>
</dbReference>
<dbReference type="PIR" id="S30301">
    <property type="entry name" value="S30301"/>
</dbReference>
<dbReference type="PIR" id="T40382">
    <property type="entry name" value="T40382"/>
</dbReference>
<dbReference type="RefSeq" id="NP_596095.1">
    <property type="nucleotide sequence ID" value="NM_001022011.2"/>
</dbReference>
<dbReference type="SMR" id="P28706"/>
<dbReference type="BioGRID" id="277566">
    <property type="interactions" value="74"/>
</dbReference>
<dbReference type="FunCoup" id="P28706">
    <property type="interactions" value="551"/>
</dbReference>
<dbReference type="STRING" id="284812.P28706"/>
<dbReference type="iPTMnet" id="P28706"/>
<dbReference type="PaxDb" id="4896-SPBC3E7.08c.1"/>
<dbReference type="EnsemblFungi" id="SPBC3E7.08c.1">
    <property type="protein sequence ID" value="SPBC3E7.08c.1:pep"/>
    <property type="gene ID" value="SPBC3E7.08c"/>
</dbReference>
<dbReference type="GeneID" id="2541051"/>
<dbReference type="KEGG" id="spo:2541051"/>
<dbReference type="PomBase" id="SPBC3E7.08c">
    <property type="gene designation" value="rad13"/>
</dbReference>
<dbReference type="VEuPathDB" id="FungiDB:SPBC3E7.08c"/>
<dbReference type="eggNOG" id="KOG2520">
    <property type="taxonomic scope" value="Eukaryota"/>
</dbReference>
<dbReference type="HOGENOM" id="CLU_003018_0_0_1"/>
<dbReference type="InParanoid" id="P28706"/>
<dbReference type="OMA" id="PNSMDFS"/>
<dbReference type="PhylomeDB" id="P28706"/>
<dbReference type="Reactome" id="R-SPO-5696395">
    <property type="pathway name" value="Formation of Incision Complex in GG-NER"/>
</dbReference>
<dbReference type="Reactome" id="R-SPO-5696400">
    <property type="pathway name" value="Dual Incision in GG-NER"/>
</dbReference>
<dbReference type="Reactome" id="R-SPO-6782135">
    <property type="pathway name" value="Dual incision in TC-NER"/>
</dbReference>
<dbReference type="PRO" id="PR:P28706"/>
<dbReference type="Proteomes" id="UP000002485">
    <property type="component" value="Chromosome II"/>
</dbReference>
<dbReference type="GO" id="GO:0005634">
    <property type="term" value="C:nucleus"/>
    <property type="evidence" value="ECO:0007005"/>
    <property type="project" value="PomBase"/>
</dbReference>
<dbReference type="GO" id="GO:0004520">
    <property type="term" value="F:DNA endonuclease activity"/>
    <property type="evidence" value="ECO:0000318"/>
    <property type="project" value="GO_Central"/>
</dbReference>
<dbReference type="GO" id="GO:0046872">
    <property type="term" value="F:metal ion binding"/>
    <property type="evidence" value="ECO:0007669"/>
    <property type="project" value="UniProtKB-KW"/>
</dbReference>
<dbReference type="GO" id="GO:0003697">
    <property type="term" value="F:single-stranded DNA binding"/>
    <property type="evidence" value="ECO:0000318"/>
    <property type="project" value="GO_Central"/>
</dbReference>
<dbReference type="GO" id="GO:0000014">
    <property type="term" value="F:single-stranded DNA endodeoxyribonuclease activity"/>
    <property type="evidence" value="ECO:0000266"/>
    <property type="project" value="PomBase"/>
</dbReference>
<dbReference type="GO" id="GO:0006289">
    <property type="term" value="P:nucleotide-excision repair"/>
    <property type="evidence" value="ECO:0000316"/>
    <property type="project" value="PomBase"/>
</dbReference>
<dbReference type="GO" id="GO:1901255">
    <property type="term" value="P:nucleotide-excision repair involved in interstrand cross-link repair"/>
    <property type="evidence" value="ECO:0000315"/>
    <property type="project" value="PomBase"/>
</dbReference>
<dbReference type="CDD" id="cd09904">
    <property type="entry name" value="H3TH_XPG"/>
    <property type="match status" value="1"/>
</dbReference>
<dbReference type="CDD" id="cd09868">
    <property type="entry name" value="PIN_XPG_RAD2"/>
    <property type="match status" value="2"/>
</dbReference>
<dbReference type="FunFam" id="3.40.50.1010:FF:000025">
    <property type="entry name" value="DNA repair protein RAD2"/>
    <property type="match status" value="1"/>
</dbReference>
<dbReference type="FunFam" id="3.40.50.1010:FF:000061">
    <property type="entry name" value="Single-stranded DNA endonuclease (Eurofung)"/>
    <property type="match status" value="1"/>
</dbReference>
<dbReference type="Gene3D" id="1.10.150.20">
    <property type="entry name" value="5' to 3' exonuclease, C-terminal subdomain"/>
    <property type="match status" value="1"/>
</dbReference>
<dbReference type="Gene3D" id="3.40.50.1010">
    <property type="entry name" value="5'-nuclease"/>
    <property type="match status" value="2"/>
</dbReference>
<dbReference type="InterPro" id="IPR036279">
    <property type="entry name" value="5-3_exonuclease_C_sf"/>
</dbReference>
<dbReference type="InterPro" id="IPR008918">
    <property type="entry name" value="HhH2"/>
</dbReference>
<dbReference type="InterPro" id="IPR029060">
    <property type="entry name" value="PIN-like_dom_sf"/>
</dbReference>
<dbReference type="InterPro" id="IPR003903">
    <property type="entry name" value="UIM_dom"/>
</dbReference>
<dbReference type="InterPro" id="IPR006086">
    <property type="entry name" value="XPG-I_dom"/>
</dbReference>
<dbReference type="InterPro" id="IPR006084">
    <property type="entry name" value="XPG/Rad2"/>
</dbReference>
<dbReference type="InterPro" id="IPR001044">
    <property type="entry name" value="XPG/Rad2_eukaryotes"/>
</dbReference>
<dbReference type="InterPro" id="IPR019974">
    <property type="entry name" value="XPG_CS"/>
</dbReference>
<dbReference type="InterPro" id="IPR006085">
    <property type="entry name" value="XPG_DNA_repair_N"/>
</dbReference>
<dbReference type="NCBIfam" id="TIGR00600">
    <property type="entry name" value="rad2"/>
    <property type="match status" value="1"/>
</dbReference>
<dbReference type="PANTHER" id="PTHR16171">
    <property type="entry name" value="DNA REPAIR PROTEIN COMPLEMENTING XP-G CELLS-RELATED"/>
    <property type="match status" value="1"/>
</dbReference>
<dbReference type="PANTHER" id="PTHR16171:SF7">
    <property type="entry name" value="DNA REPAIR PROTEIN RAD2"/>
    <property type="match status" value="1"/>
</dbReference>
<dbReference type="Pfam" id="PF00867">
    <property type="entry name" value="XPG_I"/>
    <property type="match status" value="1"/>
</dbReference>
<dbReference type="Pfam" id="PF00752">
    <property type="entry name" value="XPG_N"/>
    <property type="match status" value="1"/>
</dbReference>
<dbReference type="PRINTS" id="PR00853">
    <property type="entry name" value="XPGRADSUPER"/>
</dbReference>
<dbReference type="PRINTS" id="PR00066">
    <property type="entry name" value="XRODRMPGMNTG"/>
</dbReference>
<dbReference type="SMART" id="SM00279">
    <property type="entry name" value="HhH2"/>
    <property type="match status" value="1"/>
</dbReference>
<dbReference type="SMART" id="SM00484">
    <property type="entry name" value="XPGI"/>
    <property type="match status" value="1"/>
</dbReference>
<dbReference type="SMART" id="SM00485">
    <property type="entry name" value="XPGN"/>
    <property type="match status" value="1"/>
</dbReference>
<dbReference type="SUPFAM" id="SSF47807">
    <property type="entry name" value="5' to 3' exonuclease, C-terminal subdomain"/>
    <property type="match status" value="1"/>
</dbReference>
<dbReference type="SUPFAM" id="SSF88723">
    <property type="entry name" value="PIN domain-like"/>
    <property type="match status" value="1"/>
</dbReference>
<dbReference type="PROSITE" id="PS50330">
    <property type="entry name" value="UIM"/>
    <property type="match status" value="1"/>
</dbReference>
<dbReference type="PROSITE" id="PS00841">
    <property type="entry name" value="XPG_1"/>
    <property type="match status" value="1"/>
</dbReference>
<dbReference type="PROSITE" id="PS00842">
    <property type="entry name" value="XPG_2"/>
    <property type="match status" value="1"/>
</dbReference>
<accession>P28706</accession>
<accession>O59728</accession>
<comment type="function">
    <text evidence="4">Single-stranded DNA endonuclease involved in excision repair of DNA damaged with UV light, bulky adducts, or cross-linking agents. Essential for the incision step of excision-repair (Probable).</text>
</comment>
<comment type="cofactor">
    <cofactor evidence="1">
        <name>Mg(2+)</name>
        <dbReference type="ChEBI" id="CHEBI:18420"/>
    </cofactor>
    <text evidence="1">Binds 2 magnesium ions per subunit. They probably participate in the reaction catalyzed by the enzyme. May bind an additional third magnesium ion after substrate binding.</text>
</comment>
<comment type="subcellular location">
    <subcellularLocation>
        <location>Nucleus</location>
    </subcellularLocation>
</comment>
<comment type="similarity">
    <text evidence="4">Belongs to the XPG/RAD2 endonuclease family. XPG subfamily.</text>
</comment>
<evidence type="ECO:0000250" key="1"/>
<evidence type="ECO:0000255" key="2">
    <source>
        <dbReference type="PROSITE-ProRule" id="PRU00213"/>
    </source>
</evidence>
<evidence type="ECO:0000256" key="3">
    <source>
        <dbReference type="SAM" id="MobiDB-lite"/>
    </source>
</evidence>
<evidence type="ECO:0000305" key="4"/>
<gene>
    <name type="primary">rad13</name>
    <name type="ORF">SPBC3E7.08c</name>
</gene>
<reference key="1">
    <citation type="journal article" date="1993" name="Nucleic Acids Res.">
        <title>Evolutionary conservation of excision repair in Schizosaccharomyces pombe: evidence for a family of sequences related to the Saccharomyces cerevisiae RAD2 gene.</title>
        <authorList>
            <person name="Carr A.M."/>
            <person name="Sheldrick K.S."/>
            <person name="Murray J.M."/>
            <person name="Al-Harithy R."/>
            <person name="Watts F.Z."/>
            <person name="Lehmann A.R."/>
        </authorList>
    </citation>
    <scope>NUCLEOTIDE SEQUENCE [MRNA]</scope>
</reference>
<reference key="2">
    <citation type="journal article" date="2002" name="Nature">
        <title>The genome sequence of Schizosaccharomyces pombe.</title>
        <authorList>
            <person name="Wood V."/>
            <person name="Gwilliam R."/>
            <person name="Rajandream M.A."/>
            <person name="Lyne M.H."/>
            <person name="Lyne R."/>
            <person name="Stewart A."/>
            <person name="Sgouros J.G."/>
            <person name="Peat N."/>
            <person name="Hayles J."/>
            <person name="Baker S.G."/>
            <person name="Basham D."/>
            <person name="Bowman S."/>
            <person name="Brooks K."/>
            <person name="Brown D."/>
            <person name="Brown S."/>
            <person name="Chillingworth T."/>
            <person name="Churcher C.M."/>
            <person name="Collins M."/>
            <person name="Connor R."/>
            <person name="Cronin A."/>
            <person name="Davis P."/>
            <person name="Feltwell T."/>
            <person name="Fraser A."/>
            <person name="Gentles S."/>
            <person name="Goble A."/>
            <person name="Hamlin N."/>
            <person name="Harris D.E."/>
            <person name="Hidalgo J."/>
            <person name="Hodgson G."/>
            <person name="Holroyd S."/>
            <person name="Hornsby T."/>
            <person name="Howarth S."/>
            <person name="Huckle E.J."/>
            <person name="Hunt S."/>
            <person name="Jagels K."/>
            <person name="James K.D."/>
            <person name="Jones L."/>
            <person name="Jones M."/>
            <person name="Leather S."/>
            <person name="McDonald S."/>
            <person name="McLean J."/>
            <person name="Mooney P."/>
            <person name="Moule S."/>
            <person name="Mungall K.L."/>
            <person name="Murphy L.D."/>
            <person name="Niblett D."/>
            <person name="Odell C."/>
            <person name="Oliver K."/>
            <person name="O'Neil S."/>
            <person name="Pearson D."/>
            <person name="Quail M.A."/>
            <person name="Rabbinowitsch E."/>
            <person name="Rutherford K.M."/>
            <person name="Rutter S."/>
            <person name="Saunders D."/>
            <person name="Seeger K."/>
            <person name="Sharp S."/>
            <person name="Skelton J."/>
            <person name="Simmonds M.N."/>
            <person name="Squares R."/>
            <person name="Squares S."/>
            <person name="Stevens K."/>
            <person name="Taylor K."/>
            <person name="Taylor R.G."/>
            <person name="Tivey A."/>
            <person name="Walsh S.V."/>
            <person name="Warren T."/>
            <person name="Whitehead S."/>
            <person name="Woodward J.R."/>
            <person name="Volckaert G."/>
            <person name="Aert R."/>
            <person name="Robben J."/>
            <person name="Grymonprez B."/>
            <person name="Weltjens I."/>
            <person name="Vanstreels E."/>
            <person name="Rieger M."/>
            <person name="Schaefer M."/>
            <person name="Mueller-Auer S."/>
            <person name="Gabel C."/>
            <person name="Fuchs M."/>
            <person name="Duesterhoeft A."/>
            <person name="Fritzc C."/>
            <person name="Holzer E."/>
            <person name="Moestl D."/>
            <person name="Hilbert H."/>
            <person name="Borzym K."/>
            <person name="Langer I."/>
            <person name="Beck A."/>
            <person name="Lehrach H."/>
            <person name="Reinhardt R."/>
            <person name="Pohl T.M."/>
            <person name="Eger P."/>
            <person name="Zimmermann W."/>
            <person name="Wedler H."/>
            <person name="Wambutt R."/>
            <person name="Purnelle B."/>
            <person name="Goffeau A."/>
            <person name="Cadieu E."/>
            <person name="Dreano S."/>
            <person name="Gloux S."/>
            <person name="Lelaure V."/>
            <person name="Mottier S."/>
            <person name="Galibert F."/>
            <person name="Aves S.J."/>
            <person name="Xiang Z."/>
            <person name="Hunt C."/>
            <person name="Moore K."/>
            <person name="Hurst S.M."/>
            <person name="Lucas M."/>
            <person name="Rochet M."/>
            <person name="Gaillardin C."/>
            <person name="Tallada V.A."/>
            <person name="Garzon A."/>
            <person name="Thode G."/>
            <person name="Daga R.R."/>
            <person name="Cruzado L."/>
            <person name="Jimenez J."/>
            <person name="Sanchez M."/>
            <person name="del Rey F."/>
            <person name="Benito J."/>
            <person name="Dominguez A."/>
            <person name="Revuelta J.L."/>
            <person name="Moreno S."/>
            <person name="Armstrong J."/>
            <person name="Forsburg S.L."/>
            <person name="Cerutti L."/>
            <person name="Lowe T."/>
            <person name="McCombie W.R."/>
            <person name="Paulsen I."/>
            <person name="Potashkin J."/>
            <person name="Shpakovski G.V."/>
            <person name="Ussery D."/>
            <person name="Barrell B.G."/>
            <person name="Nurse P."/>
        </authorList>
    </citation>
    <scope>NUCLEOTIDE SEQUENCE [LARGE SCALE GENOMIC DNA]</scope>
    <source>
        <strain>972 / ATCC 24843</strain>
    </source>
</reference>
<sequence length="1112" mass="126329">MGVSGLWDILEPVKRPVKLETLVNKRLAIDASIWIYQFLKAVRDKEGNQLKSSHVVGFFRRICKLLFFGIKPVFVFDGGAPSLKRQTIQKRQARRLDREENATVTANKLLALQMRHQAMLLEENNKKATALANASVQNERQMPSSMTLDNSEIKPVLNQRKNYLKPDPYQLPEMDVSFDKLGSSYDPRIMSQDELTQYVSSFTKIEDINLFDFSNIDFDSELFQSLPDTDKYSILSAARLRSRLRMGLSSEQLSEMFPNRMDFSRFQIERLKERNDLTQRLMDFTGMNEFGPSRVVSEKNREYILVKNEGAEGGWALGVISGSTNNEPIIIDDEATKLSSNLIDEDEDEAFYDVPLPSRSHSMNPRELVAAKLKEIKENSFSENQQSDEADYNVTDDLILQLATQQSLEENKKSKELFSLSASEFDKLNSEKKTFEILSTDIPAEDSMNSLLNDEENLKLEHVGDVSNDSLAFAEKKHPENGTSIFMDALPSASREKKTNDLIDPLPFQPMDWGKSIFFEKLKKPTETFMDSKTDIPSEAPDNSKLVEDTNLHTINATVNIESDLDAAKPGIENPIISPLLPVKDDEKDLDLRELNPLEPFENMKEQADDGTVTNPLNVSSDKAMSVYLLSSENAKDTGDIKSESIDAVLPTLETSSPSLSIPTDFQKEASPNKGAAALSSKVEPEVVEKLLDEEEEEMIIRMAEEEKEYDRFVSELNQRHETEEWNQEAFEKRLKELKNQKRSEKRDADEVTQVMIKECQELLRLFGLPYIVAPQEAEAQCSKLLELKLVDGIVTDDSDVFLFGGTRVYRNMFNQNKFVELYLMDDMKREFNVNQMDLIKLAHLLGSDYTMGLSRVGPVLALEILHEFPGDTGLFEFKKWFQRLSTGHASKNDVNTPVKKRINKLVGKIILPSEFPNPLVDEAYLHPAVDDSKQSFQWGIPDLDELRQFLMATVGWSKQRTNEVLLPVIQDMHKKQFVGTQSNLTQFFEGGNTNVYAPRVAYHFKSKRLENALSSFKNQISNQSPMSEEIQADADAFGESKGSDELQSRILRRKKMMASKNSSDSDSDSEDNFLASLTPKTNSSSISIENLPRKTKLSTSLLKKPSKRRRK</sequence>
<feature type="chain" id="PRO_0000154036" description="DNA repair protein rad13">
    <location>
        <begin position="1"/>
        <end position="1112"/>
    </location>
</feature>
<feature type="domain" description="UIM" evidence="2">
    <location>
        <begin position="395"/>
        <end position="414"/>
    </location>
</feature>
<feature type="region of interest" description="N-domain">
    <location>
        <begin position="1"/>
        <end position="95"/>
    </location>
</feature>
<feature type="region of interest" description="I-domain">
    <location>
        <begin position="742"/>
        <end position="870"/>
    </location>
</feature>
<feature type="region of interest" description="Disordered" evidence="3">
    <location>
        <begin position="1056"/>
        <end position="1112"/>
    </location>
</feature>
<feature type="compositionally biased region" description="Polar residues" evidence="3">
    <location>
        <begin position="1079"/>
        <end position="1089"/>
    </location>
</feature>
<feature type="binding site" evidence="1">
    <location>
        <position position="30"/>
    </location>
    <ligand>
        <name>Mg(2+)</name>
        <dbReference type="ChEBI" id="CHEBI:18420"/>
        <label>1</label>
    </ligand>
</feature>
<feature type="binding site" evidence="1">
    <location>
        <position position="77"/>
    </location>
    <ligand>
        <name>Mg(2+)</name>
        <dbReference type="ChEBI" id="CHEBI:18420"/>
        <label>1</label>
    </ligand>
</feature>
<feature type="binding site" evidence="1">
    <location>
        <position position="777"/>
    </location>
    <ligand>
        <name>Mg(2+)</name>
        <dbReference type="ChEBI" id="CHEBI:18420"/>
        <label>1</label>
    </ligand>
</feature>
<feature type="binding site" evidence="1">
    <location>
        <position position="779"/>
    </location>
    <ligand>
        <name>Mg(2+)</name>
        <dbReference type="ChEBI" id="CHEBI:18420"/>
        <label>1</label>
    </ligand>
</feature>
<feature type="binding site" evidence="1">
    <location>
        <position position="798"/>
    </location>
    <ligand>
        <name>Mg(2+)</name>
        <dbReference type="ChEBI" id="CHEBI:18420"/>
        <label>2</label>
    </ligand>
</feature>
<feature type="binding site" evidence="1">
    <location>
        <position position="800"/>
    </location>
    <ligand>
        <name>Mg(2+)</name>
        <dbReference type="ChEBI" id="CHEBI:18420"/>
        <label>2</label>
    </ligand>
</feature>
<feature type="binding site" evidence="1">
    <location>
        <position position="849"/>
    </location>
    <ligand>
        <name>Mg(2+)</name>
        <dbReference type="ChEBI" id="CHEBI:18420"/>
        <label>2</label>
    </ligand>
</feature>
<feature type="sequence conflict" description="In Ref. 1; CAA47291." evidence="4" ref="1">
    <original>D</original>
    <variation>N</variation>
    <location>
        <position position="8"/>
    </location>
</feature>
<feature type="sequence conflict" description="In Ref. 1; CAA47291." evidence="4" ref="1">
    <original>LKNQKR</original>
    <variation>AQKSKKG</variation>
    <location>
        <begin position="738"/>
        <end position="743"/>
    </location>
</feature>
<proteinExistence type="evidence at transcript level"/>